<proteinExistence type="inferred from homology"/>
<feature type="chain" id="PRO_1000116289" description="Argininosuccinate synthase">
    <location>
        <begin position="1"/>
        <end position="399"/>
    </location>
</feature>
<feature type="binding site" evidence="1">
    <location>
        <begin position="8"/>
        <end position="16"/>
    </location>
    <ligand>
        <name>ATP</name>
        <dbReference type="ChEBI" id="CHEBI:30616"/>
    </ligand>
</feature>
<feature type="binding site" evidence="1">
    <location>
        <position position="87"/>
    </location>
    <ligand>
        <name>L-citrulline</name>
        <dbReference type="ChEBI" id="CHEBI:57743"/>
    </ligand>
</feature>
<feature type="binding site" evidence="1">
    <location>
        <position position="117"/>
    </location>
    <ligand>
        <name>ATP</name>
        <dbReference type="ChEBI" id="CHEBI:30616"/>
    </ligand>
</feature>
<feature type="binding site" evidence="1">
    <location>
        <position position="119"/>
    </location>
    <ligand>
        <name>L-aspartate</name>
        <dbReference type="ChEBI" id="CHEBI:29991"/>
    </ligand>
</feature>
<feature type="binding site" evidence="1">
    <location>
        <position position="123"/>
    </location>
    <ligand>
        <name>L-aspartate</name>
        <dbReference type="ChEBI" id="CHEBI:29991"/>
    </ligand>
</feature>
<feature type="binding site" evidence="1">
    <location>
        <position position="123"/>
    </location>
    <ligand>
        <name>L-citrulline</name>
        <dbReference type="ChEBI" id="CHEBI:57743"/>
    </ligand>
</feature>
<feature type="binding site" evidence="1">
    <location>
        <position position="124"/>
    </location>
    <ligand>
        <name>L-aspartate</name>
        <dbReference type="ChEBI" id="CHEBI:29991"/>
    </ligand>
</feature>
<feature type="binding site" evidence="1">
    <location>
        <position position="127"/>
    </location>
    <ligand>
        <name>L-citrulline</name>
        <dbReference type="ChEBI" id="CHEBI:57743"/>
    </ligand>
</feature>
<feature type="binding site" evidence="1">
    <location>
        <position position="175"/>
    </location>
    <ligand>
        <name>L-citrulline</name>
        <dbReference type="ChEBI" id="CHEBI:57743"/>
    </ligand>
</feature>
<feature type="binding site" evidence="1">
    <location>
        <position position="260"/>
    </location>
    <ligand>
        <name>L-citrulline</name>
        <dbReference type="ChEBI" id="CHEBI:57743"/>
    </ligand>
</feature>
<feature type="binding site" evidence="1">
    <location>
        <position position="272"/>
    </location>
    <ligand>
        <name>L-citrulline</name>
        <dbReference type="ChEBI" id="CHEBI:57743"/>
    </ligand>
</feature>
<sequence>MADRVVLAYSGGLDTSVAISWIGKETGKEVVAVAIDLGQGGEDMEVVRQRALDCGAVESVVVDARDEFADEYCLPTIQANALYMDRYPLVSAISRPLIVKHLVEAARAHGGTTVAHGCTGKGNDQVRFEVGFGSLAPDLDVIAPVRDYAWTREKAIAFAEENEIPINVSKKSPFSIDQNVWGRAVETGFLEDLWNAPTKDVYDYTQDPTVNWQAPDELIISFEAGRPVAIDGKPVSVLEAIQELNRRAGAQGVGRLDVVEDRLVGIKSREIYEAPGAMVLINAHQELEHVTQERELGRYKRQTEQRWSELVYDGLWFSPLKVALDTFIEKTQERVSGDIRLVLHGGAIIVNGRRSNESLYDFNLATYDEGDTFDQSYAKGFVQIHGLSSKVAAKRDLGL</sequence>
<dbReference type="EC" id="6.3.4.5" evidence="1"/>
<dbReference type="EMBL" id="AP011115">
    <property type="protein sequence ID" value="BAH48928.1"/>
    <property type="molecule type" value="Genomic_DNA"/>
</dbReference>
<dbReference type="RefSeq" id="WP_009473614.1">
    <property type="nucleotide sequence ID" value="NC_012522.1"/>
</dbReference>
<dbReference type="SMR" id="C1ASZ6"/>
<dbReference type="STRING" id="632772.ROP_06810"/>
<dbReference type="KEGG" id="rop:ROP_06810"/>
<dbReference type="PATRIC" id="fig|632772.20.peg.742"/>
<dbReference type="HOGENOM" id="CLU_032784_4_2_11"/>
<dbReference type="OrthoDB" id="9801641at2"/>
<dbReference type="UniPathway" id="UPA00068">
    <property type="reaction ID" value="UER00113"/>
</dbReference>
<dbReference type="Proteomes" id="UP000002212">
    <property type="component" value="Chromosome"/>
</dbReference>
<dbReference type="GO" id="GO:0005737">
    <property type="term" value="C:cytoplasm"/>
    <property type="evidence" value="ECO:0007669"/>
    <property type="project" value="UniProtKB-SubCell"/>
</dbReference>
<dbReference type="GO" id="GO:0004055">
    <property type="term" value="F:argininosuccinate synthase activity"/>
    <property type="evidence" value="ECO:0007669"/>
    <property type="project" value="UniProtKB-UniRule"/>
</dbReference>
<dbReference type="GO" id="GO:0005524">
    <property type="term" value="F:ATP binding"/>
    <property type="evidence" value="ECO:0007669"/>
    <property type="project" value="UniProtKB-UniRule"/>
</dbReference>
<dbReference type="GO" id="GO:0000053">
    <property type="term" value="P:argininosuccinate metabolic process"/>
    <property type="evidence" value="ECO:0007669"/>
    <property type="project" value="TreeGrafter"/>
</dbReference>
<dbReference type="GO" id="GO:0006526">
    <property type="term" value="P:L-arginine biosynthetic process"/>
    <property type="evidence" value="ECO:0007669"/>
    <property type="project" value="UniProtKB-UniRule"/>
</dbReference>
<dbReference type="GO" id="GO:0000050">
    <property type="term" value="P:urea cycle"/>
    <property type="evidence" value="ECO:0007669"/>
    <property type="project" value="TreeGrafter"/>
</dbReference>
<dbReference type="CDD" id="cd01999">
    <property type="entry name" value="ASS"/>
    <property type="match status" value="1"/>
</dbReference>
<dbReference type="FunFam" id="3.40.50.620:FF:000038">
    <property type="entry name" value="Argininosuccinate synthase"/>
    <property type="match status" value="1"/>
</dbReference>
<dbReference type="FunFam" id="3.90.1260.10:FF:000007">
    <property type="entry name" value="Argininosuccinate synthase"/>
    <property type="match status" value="1"/>
</dbReference>
<dbReference type="Gene3D" id="3.90.1260.10">
    <property type="entry name" value="Argininosuccinate synthetase, chain A, domain 2"/>
    <property type="match status" value="1"/>
</dbReference>
<dbReference type="Gene3D" id="3.40.50.620">
    <property type="entry name" value="HUPs"/>
    <property type="match status" value="1"/>
</dbReference>
<dbReference type="Gene3D" id="1.20.5.470">
    <property type="entry name" value="Single helix bin"/>
    <property type="match status" value="1"/>
</dbReference>
<dbReference type="HAMAP" id="MF_00005">
    <property type="entry name" value="Arg_succ_synth_type1"/>
    <property type="match status" value="1"/>
</dbReference>
<dbReference type="InterPro" id="IPR048268">
    <property type="entry name" value="Arginosuc_syn_C"/>
</dbReference>
<dbReference type="InterPro" id="IPR048267">
    <property type="entry name" value="Arginosuc_syn_N"/>
</dbReference>
<dbReference type="InterPro" id="IPR001518">
    <property type="entry name" value="Arginosuc_synth"/>
</dbReference>
<dbReference type="InterPro" id="IPR018223">
    <property type="entry name" value="Arginosuc_synth_CS"/>
</dbReference>
<dbReference type="InterPro" id="IPR023434">
    <property type="entry name" value="Arginosuc_synth_type_1_subfam"/>
</dbReference>
<dbReference type="InterPro" id="IPR024074">
    <property type="entry name" value="AS_cat/multimer_dom_body"/>
</dbReference>
<dbReference type="InterPro" id="IPR014729">
    <property type="entry name" value="Rossmann-like_a/b/a_fold"/>
</dbReference>
<dbReference type="NCBIfam" id="TIGR00032">
    <property type="entry name" value="argG"/>
    <property type="match status" value="1"/>
</dbReference>
<dbReference type="NCBIfam" id="NF001770">
    <property type="entry name" value="PRK00509.1"/>
    <property type="match status" value="1"/>
</dbReference>
<dbReference type="PANTHER" id="PTHR11587">
    <property type="entry name" value="ARGININOSUCCINATE SYNTHASE"/>
    <property type="match status" value="1"/>
</dbReference>
<dbReference type="PANTHER" id="PTHR11587:SF2">
    <property type="entry name" value="ARGININOSUCCINATE SYNTHASE"/>
    <property type="match status" value="1"/>
</dbReference>
<dbReference type="Pfam" id="PF20979">
    <property type="entry name" value="Arginosuc_syn_C"/>
    <property type="match status" value="1"/>
</dbReference>
<dbReference type="Pfam" id="PF00764">
    <property type="entry name" value="Arginosuc_synth"/>
    <property type="match status" value="1"/>
</dbReference>
<dbReference type="SUPFAM" id="SSF52402">
    <property type="entry name" value="Adenine nucleotide alpha hydrolases-like"/>
    <property type="match status" value="1"/>
</dbReference>
<dbReference type="SUPFAM" id="SSF69864">
    <property type="entry name" value="Argininosuccinate synthetase, C-terminal domain"/>
    <property type="match status" value="1"/>
</dbReference>
<dbReference type="PROSITE" id="PS00564">
    <property type="entry name" value="ARGININOSUCCIN_SYN_1"/>
    <property type="match status" value="1"/>
</dbReference>
<dbReference type="PROSITE" id="PS00565">
    <property type="entry name" value="ARGININOSUCCIN_SYN_2"/>
    <property type="match status" value="1"/>
</dbReference>
<protein>
    <recommendedName>
        <fullName evidence="1">Argininosuccinate synthase</fullName>
        <ecNumber evidence="1">6.3.4.5</ecNumber>
    </recommendedName>
    <alternativeName>
        <fullName evidence="1">Citrulline--aspartate ligase</fullName>
    </alternativeName>
</protein>
<comment type="catalytic activity">
    <reaction evidence="1">
        <text>L-citrulline + L-aspartate + ATP = 2-(N(omega)-L-arginino)succinate + AMP + diphosphate + H(+)</text>
        <dbReference type="Rhea" id="RHEA:10932"/>
        <dbReference type="ChEBI" id="CHEBI:15378"/>
        <dbReference type="ChEBI" id="CHEBI:29991"/>
        <dbReference type="ChEBI" id="CHEBI:30616"/>
        <dbReference type="ChEBI" id="CHEBI:33019"/>
        <dbReference type="ChEBI" id="CHEBI:57472"/>
        <dbReference type="ChEBI" id="CHEBI:57743"/>
        <dbReference type="ChEBI" id="CHEBI:456215"/>
        <dbReference type="EC" id="6.3.4.5"/>
    </reaction>
</comment>
<comment type="pathway">
    <text evidence="1">Amino-acid biosynthesis; L-arginine biosynthesis; L-arginine from L-ornithine and carbamoyl phosphate: step 2/3.</text>
</comment>
<comment type="subunit">
    <text evidence="1">Homotetramer.</text>
</comment>
<comment type="subcellular location">
    <subcellularLocation>
        <location evidence="1">Cytoplasm</location>
    </subcellularLocation>
</comment>
<comment type="similarity">
    <text evidence="1">Belongs to the argininosuccinate synthase family. Type 1 subfamily.</text>
</comment>
<organism>
    <name type="scientific">Rhodococcus opacus (strain B4)</name>
    <dbReference type="NCBI Taxonomy" id="632772"/>
    <lineage>
        <taxon>Bacteria</taxon>
        <taxon>Bacillati</taxon>
        <taxon>Actinomycetota</taxon>
        <taxon>Actinomycetes</taxon>
        <taxon>Mycobacteriales</taxon>
        <taxon>Nocardiaceae</taxon>
        <taxon>Rhodococcus</taxon>
    </lineage>
</organism>
<accession>C1ASZ6</accession>
<gene>
    <name evidence="1" type="primary">argG</name>
    <name type="ordered locus">ROP_06810</name>
</gene>
<name>ASSY_RHOOB</name>
<keyword id="KW-0028">Amino-acid biosynthesis</keyword>
<keyword id="KW-0055">Arginine biosynthesis</keyword>
<keyword id="KW-0067">ATP-binding</keyword>
<keyword id="KW-0963">Cytoplasm</keyword>
<keyword id="KW-0436">Ligase</keyword>
<keyword id="KW-0547">Nucleotide-binding</keyword>
<reference key="1">
    <citation type="submission" date="2009-03" db="EMBL/GenBank/DDBJ databases">
        <title>Comparison of the complete genome sequences of Rhodococcus erythropolis PR4 and Rhodococcus opacus B4.</title>
        <authorList>
            <person name="Takarada H."/>
            <person name="Sekine M."/>
            <person name="Hosoyama A."/>
            <person name="Yamada R."/>
            <person name="Fujisawa T."/>
            <person name="Omata S."/>
            <person name="Shimizu A."/>
            <person name="Tsukatani N."/>
            <person name="Tanikawa S."/>
            <person name="Fujita N."/>
            <person name="Harayama S."/>
        </authorList>
    </citation>
    <scope>NUCLEOTIDE SEQUENCE [LARGE SCALE GENOMIC DNA]</scope>
    <source>
        <strain>B4</strain>
    </source>
</reference>
<evidence type="ECO:0000255" key="1">
    <source>
        <dbReference type="HAMAP-Rule" id="MF_00005"/>
    </source>
</evidence>